<comment type="alternative products">
    <event type="alternative splicing"/>
    <isoform>
        <id>Q6P387-1</id>
        <name>1</name>
        <sequence type="displayed"/>
    </isoform>
    <isoform>
        <id>Q6P387-2</id>
        <name>2</name>
        <sequence type="described" ref="VSP_023435"/>
    </isoform>
</comment>
<feature type="chain" id="PRO_0000279429" description="Uncharacterized protein C16orf46">
    <location>
        <begin position="1"/>
        <end position="395"/>
    </location>
</feature>
<feature type="region of interest" description="Disordered" evidence="1">
    <location>
        <begin position="115"/>
        <end position="144"/>
    </location>
</feature>
<feature type="compositionally biased region" description="Low complexity" evidence="1">
    <location>
        <begin position="128"/>
        <end position="141"/>
    </location>
</feature>
<feature type="splice variant" id="VSP_023435" description="In isoform 2." evidence="3">
    <original>VSRVIIPVSTHRIL</original>
    <variation>HRKKKIK</variation>
    <location>
        <begin position="382"/>
        <end position="395"/>
    </location>
</feature>
<feature type="sequence variant" id="VAR_030893" description="In dbSNP:rs17855893." evidence="2">
    <original>T</original>
    <variation>S</variation>
    <location>
        <position position="77"/>
    </location>
</feature>
<feature type="sequence variant" id="VAR_030894" description="In dbSNP:rs7198494.">
    <original>I</original>
    <variation>T</variation>
    <location>
        <position position="288"/>
    </location>
</feature>
<feature type="sequence variant" id="VAR_030895" description="In dbSNP:rs10459872.">
    <original>Y</original>
    <variation>H</variation>
    <location>
        <position position="335"/>
    </location>
</feature>
<feature type="sequence variant" id="VAR_030896" description="In dbSNP:rs9930623.">
    <original>K</original>
    <variation>E</variation>
    <location>
        <position position="357"/>
    </location>
</feature>
<feature type="sequence variant" id="VAR_030897" description="In dbSNP:rs12929250.">
    <original>P</original>
    <variation>S</variation>
    <location>
        <position position="388"/>
    </location>
</feature>
<feature type="sequence conflict" description="In Ref. 1; BAB71401." evidence="4" ref="1">
    <original>S</original>
    <variation>L</variation>
    <location>
        <position position="217"/>
    </location>
</feature>
<dbReference type="EMBL" id="AK057264">
    <property type="protein sequence ID" value="BAB71401.1"/>
    <property type="molecule type" value="mRNA"/>
</dbReference>
<dbReference type="EMBL" id="BC064143">
    <property type="protein sequence ID" value="AAH64143.1"/>
    <property type="molecule type" value="mRNA"/>
</dbReference>
<dbReference type="CCDS" id="CCDS10932.1">
    <molecule id="Q6P387-1"/>
</dbReference>
<dbReference type="CCDS" id="CCDS42201.1">
    <molecule id="Q6P387-2"/>
</dbReference>
<dbReference type="RefSeq" id="NP_001094343.1">
    <molecule id="Q6P387-2"/>
    <property type="nucleotide sequence ID" value="NM_001100873.2"/>
</dbReference>
<dbReference type="RefSeq" id="NP_689550.2">
    <molecule id="Q6P387-1"/>
    <property type="nucleotide sequence ID" value="NM_152337.3"/>
</dbReference>
<dbReference type="RefSeq" id="XP_005255849.1">
    <molecule id="Q6P387-2"/>
    <property type="nucleotide sequence ID" value="XM_005255792.3"/>
</dbReference>
<dbReference type="RefSeq" id="XP_011521150.3">
    <molecule id="Q6P387-1"/>
    <property type="nucleotide sequence ID" value="XM_011522848.3"/>
</dbReference>
<dbReference type="RefSeq" id="XP_011521151.3">
    <molecule id="Q6P387-1"/>
    <property type="nucleotide sequence ID" value="XM_011522849.3"/>
</dbReference>
<dbReference type="RefSeq" id="XP_047289542.1">
    <molecule id="Q6P387-1"/>
    <property type="nucleotide sequence ID" value="XM_047433586.1"/>
</dbReference>
<dbReference type="RefSeq" id="XP_054189162.1">
    <molecule id="Q6P387-1"/>
    <property type="nucleotide sequence ID" value="XM_054333187.1"/>
</dbReference>
<dbReference type="RefSeq" id="XP_054189163.1">
    <molecule id="Q6P387-1"/>
    <property type="nucleotide sequence ID" value="XM_054333188.1"/>
</dbReference>
<dbReference type="RefSeq" id="XP_054189164.1">
    <molecule id="Q6P387-1"/>
    <property type="nucleotide sequence ID" value="XM_054333189.1"/>
</dbReference>
<dbReference type="RefSeq" id="XP_054189165.1">
    <molecule id="Q6P387-2"/>
    <property type="nucleotide sequence ID" value="XM_054333190.1"/>
</dbReference>
<dbReference type="BioGRID" id="125833">
    <property type="interactions" value="3"/>
</dbReference>
<dbReference type="FunCoup" id="Q6P387">
    <property type="interactions" value="926"/>
</dbReference>
<dbReference type="IntAct" id="Q6P387">
    <property type="interactions" value="3"/>
</dbReference>
<dbReference type="STRING" id="9606.ENSP00000299578"/>
<dbReference type="iPTMnet" id="Q6P387"/>
<dbReference type="PhosphoSitePlus" id="Q6P387"/>
<dbReference type="BioMuta" id="C16orf46"/>
<dbReference type="DMDM" id="147689729"/>
<dbReference type="MassIVE" id="Q6P387"/>
<dbReference type="PaxDb" id="9606-ENSP00000299578"/>
<dbReference type="PeptideAtlas" id="Q6P387"/>
<dbReference type="Antibodypedia" id="30436">
    <property type="antibodies" value="45 antibodies from 13 providers"/>
</dbReference>
<dbReference type="DNASU" id="123775"/>
<dbReference type="Ensembl" id="ENST00000299578.10">
    <molecule id="Q6P387-1"/>
    <property type="protein sequence ID" value="ENSP00000299578.4"/>
    <property type="gene ID" value="ENSG00000166455.14"/>
</dbReference>
<dbReference type="Ensembl" id="ENST00000378611.8">
    <molecule id="Q6P387-2"/>
    <property type="protein sequence ID" value="ENSP00000367874.4"/>
    <property type="gene ID" value="ENSG00000166455.14"/>
</dbReference>
<dbReference type="Ensembl" id="ENST00000709365.1">
    <molecule id="Q6P387-2"/>
    <property type="protein sequence ID" value="ENSP00000517646.1"/>
    <property type="gene ID" value="ENSG00000291963.1"/>
</dbReference>
<dbReference type="Ensembl" id="ENST00000709366.1">
    <molecule id="Q6P387-1"/>
    <property type="protein sequence ID" value="ENSP00000517647.1"/>
    <property type="gene ID" value="ENSG00000291963.1"/>
</dbReference>
<dbReference type="GeneID" id="123775"/>
<dbReference type="KEGG" id="hsa:123775"/>
<dbReference type="MANE-Select" id="ENST00000299578.10">
    <property type="protein sequence ID" value="ENSP00000299578.4"/>
    <property type="RefSeq nucleotide sequence ID" value="NM_152337.3"/>
    <property type="RefSeq protein sequence ID" value="NP_689550.2"/>
</dbReference>
<dbReference type="UCSC" id="uc002fgc.5">
    <molecule id="Q6P387-1"/>
    <property type="organism name" value="human"/>
</dbReference>
<dbReference type="AGR" id="HGNC:26525"/>
<dbReference type="CTD" id="123775"/>
<dbReference type="GeneCards" id="C16orf46"/>
<dbReference type="HGNC" id="HGNC:26525">
    <property type="gene designation" value="C16orf46"/>
</dbReference>
<dbReference type="HPA" id="ENSG00000166455">
    <property type="expression patterns" value="Tissue enhanced (testis)"/>
</dbReference>
<dbReference type="neXtProt" id="NX_Q6P387"/>
<dbReference type="OpenTargets" id="ENSG00000166455"/>
<dbReference type="PharmGKB" id="PA142672254"/>
<dbReference type="VEuPathDB" id="HostDB:ENSG00000166455"/>
<dbReference type="eggNOG" id="ENOG502SE77">
    <property type="taxonomic scope" value="Eukaryota"/>
</dbReference>
<dbReference type="GeneTree" id="ENSGT00390000017224"/>
<dbReference type="HOGENOM" id="CLU_058645_0_0_1"/>
<dbReference type="InParanoid" id="Q6P387"/>
<dbReference type="OMA" id="CKEDWAT"/>
<dbReference type="OrthoDB" id="9943020at2759"/>
<dbReference type="PAN-GO" id="Q6P387">
    <property type="GO annotations" value="0 GO annotations based on evolutionary models"/>
</dbReference>
<dbReference type="PhylomeDB" id="Q6P387"/>
<dbReference type="TreeFam" id="TF338349"/>
<dbReference type="PathwayCommons" id="Q6P387"/>
<dbReference type="SignaLink" id="Q6P387"/>
<dbReference type="BioGRID-ORCS" id="123775">
    <property type="hits" value="8 hits in 1116 CRISPR screens"/>
</dbReference>
<dbReference type="ChiTaRS" id="C16orf46">
    <property type="organism name" value="human"/>
</dbReference>
<dbReference type="GenomeRNAi" id="123775"/>
<dbReference type="Pharos" id="Q6P387">
    <property type="development level" value="Tdark"/>
</dbReference>
<dbReference type="PRO" id="PR:Q6P387"/>
<dbReference type="Proteomes" id="UP000005640">
    <property type="component" value="Chromosome 16"/>
</dbReference>
<dbReference type="RNAct" id="Q6P387">
    <property type="molecule type" value="protein"/>
</dbReference>
<dbReference type="Bgee" id="ENSG00000166455">
    <property type="expression patterns" value="Expressed in male germ line stem cell (sensu Vertebrata) in testis and 96 other cell types or tissues"/>
</dbReference>
<dbReference type="ExpressionAtlas" id="Q6P387">
    <property type="expression patterns" value="baseline and differential"/>
</dbReference>
<dbReference type="GO" id="GO:0005829">
    <property type="term" value="C:cytosol"/>
    <property type="evidence" value="ECO:0000314"/>
    <property type="project" value="HPA"/>
</dbReference>
<dbReference type="GO" id="GO:0005654">
    <property type="term" value="C:nucleoplasm"/>
    <property type="evidence" value="ECO:0000314"/>
    <property type="project" value="HPA"/>
</dbReference>
<dbReference type="InterPro" id="IPR027836">
    <property type="entry name" value="DUF4529"/>
</dbReference>
<dbReference type="PANTHER" id="PTHR36869">
    <property type="entry name" value="CHROMOSOME 16 OPEN READING FRAME 46"/>
    <property type="match status" value="1"/>
</dbReference>
<dbReference type="PANTHER" id="PTHR36869:SF1">
    <property type="entry name" value="CHROMOSOME 16 OPEN READING FRAME 46"/>
    <property type="match status" value="1"/>
</dbReference>
<dbReference type="Pfam" id="PF15032">
    <property type="entry name" value="DUF4529"/>
    <property type="match status" value="1"/>
</dbReference>
<keyword id="KW-0025">Alternative splicing</keyword>
<keyword id="KW-1267">Proteomics identification</keyword>
<keyword id="KW-1185">Reference proteome</keyword>
<sequence>MDLCQKNETDLENAENNEIQFTEETEPTYTCPDGKSEKNHVYCLLDVSDITLEQDEKAKEFIIGTGWEEAVQGWGRTSPAACIWPRKIPKKARVGEGACSDCLVCVNLSHWSLQTKPPTEGGPEKDQSSPSQTQAAPQGPSTASRAISDICFPTYFRAEKKSLQIKEFIWCNKDWAIPGTNRGKASGNPSGGAHRGLSIPGPLTSRALLVLPPLKASLSNALDVLGKKSKNSFLQSEEKVLDVEKDGCVAYAYGLKTADGKGEKRASELAKHPMVNDTPSSPSPAAQISLLTDPEQRCLHWSLLSEKNLACPPDPSNVRYLAALQLLQKRGVQSYKSKFKAKEPRSPVITRKHVLPKAKQENRPQMLETKVFPRPVLPSLTVSRVIIPVSTHRIL</sequence>
<accession>Q6P387</accession>
<accession>Q96MA7</accession>
<proteinExistence type="evidence at protein level"/>
<organism>
    <name type="scientific">Homo sapiens</name>
    <name type="common">Human</name>
    <dbReference type="NCBI Taxonomy" id="9606"/>
    <lineage>
        <taxon>Eukaryota</taxon>
        <taxon>Metazoa</taxon>
        <taxon>Chordata</taxon>
        <taxon>Craniata</taxon>
        <taxon>Vertebrata</taxon>
        <taxon>Euteleostomi</taxon>
        <taxon>Mammalia</taxon>
        <taxon>Eutheria</taxon>
        <taxon>Euarchontoglires</taxon>
        <taxon>Primates</taxon>
        <taxon>Haplorrhini</taxon>
        <taxon>Catarrhini</taxon>
        <taxon>Hominidae</taxon>
        <taxon>Homo</taxon>
    </lineage>
</organism>
<protein>
    <recommendedName>
        <fullName>Uncharacterized protein C16orf46</fullName>
    </recommendedName>
</protein>
<name>CP046_HUMAN</name>
<evidence type="ECO:0000256" key="1">
    <source>
        <dbReference type="SAM" id="MobiDB-lite"/>
    </source>
</evidence>
<evidence type="ECO:0000269" key="2">
    <source>
    </source>
</evidence>
<evidence type="ECO:0000303" key="3">
    <source>
    </source>
</evidence>
<evidence type="ECO:0000305" key="4"/>
<gene>
    <name type="primary">C16orf46</name>
</gene>
<reference key="1">
    <citation type="journal article" date="2004" name="Nat. Genet.">
        <title>Complete sequencing and characterization of 21,243 full-length human cDNAs.</title>
        <authorList>
            <person name="Ota T."/>
            <person name="Suzuki Y."/>
            <person name="Nishikawa T."/>
            <person name="Otsuki T."/>
            <person name="Sugiyama T."/>
            <person name="Irie R."/>
            <person name="Wakamatsu A."/>
            <person name="Hayashi K."/>
            <person name="Sato H."/>
            <person name="Nagai K."/>
            <person name="Kimura K."/>
            <person name="Makita H."/>
            <person name="Sekine M."/>
            <person name="Obayashi M."/>
            <person name="Nishi T."/>
            <person name="Shibahara T."/>
            <person name="Tanaka T."/>
            <person name="Ishii S."/>
            <person name="Yamamoto J."/>
            <person name="Saito K."/>
            <person name="Kawai Y."/>
            <person name="Isono Y."/>
            <person name="Nakamura Y."/>
            <person name="Nagahari K."/>
            <person name="Murakami K."/>
            <person name="Yasuda T."/>
            <person name="Iwayanagi T."/>
            <person name="Wagatsuma M."/>
            <person name="Shiratori A."/>
            <person name="Sudo H."/>
            <person name="Hosoiri T."/>
            <person name="Kaku Y."/>
            <person name="Kodaira H."/>
            <person name="Kondo H."/>
            <person name="Sugawara M."/>
            <person name="Takahashi M."/>
            <person name="Kanda K."/>
            <person name="Yokoi T."/>
            <person name="Furuya T."/>
            <person name="Kikkawa E."/>
            <person name="Omura Y."/>
            <person name="Abe K."/>
            <person name="Kamihara K."/>
            <person name="Katsuta N."/>
            <person name="Sato K."/>
            <person name="Tanikawa M."/>
            <person name="Yamazaki M."/>
            <person name="Ninomiya K."/>
            <person name="Ishibashi T."/>
            <person name="Yamashita H."/>
            <person name="Murakawa K."/>
            <person name="Fujimori K."/>
            <person name="Tanai H."/>
            <person name="Kimata M."/>
            <person name="Watanabe M."/>
            <person name="Hiraoka S."/>
            <person name="Chiba Y."/>
            <person name="Ishida S."/>
            <person name="Ono Y."/>
            <person name="Takiguchi S."/>
            <person name="Watanabe S."/>
            <person name="Yosida M."/>
            <person name="Hotuta T."/>
            <person name="Kusano J."/>
            <person name="Kanehori K."/>
            <person name="Takahashi-Fujii A."/>
            <person name="Hara H."/>
            <person name="Tanase T.-O."/>
            <person name="Nomura Y."/>
            <person name="Togiya S."/>
            <person name="Komai F."/>
            <person name="Hara R."/>
            <person name="Takeuchi K."/>
            <person name="Arita M."/>
            <person name="Imose N."/>
            <person name="Musashino K."/>
            <person name="Yuuki H."/>
            <person name="Oshima A."/>
            <person name="Sasaki N."/>
            <person name="Aotsuka S."/>
            <person name="Yoshikawa Y."/>
            <person name="Matsunawa H."/>
            <person name="Ichihara T."/>
            <person name="Shiohata N."/>
            <person name="Sano S."/>
            <person name="Moriya S."/>
            <person name="Momiyama H."/>
            <person name="Satoh N."/>
            <person name="Takami S."/>
            <person name="Terashima Y."/>
            <person name="Suzuki O."/>
            <person name="Nakagawa S."/>
            <person name="Senoh A."/>
            <person name="Mizoguchi H."/>
            <person name="Goto Y."/>
            <person name="Shimizu F."/>
            <person name="Wakebe H."/>
            <person name="Hishigaki H."/>
            <person name="Watanabe T."/>
            <person name="Sugiyama A."/>
            <person name="Takemoto M."/>
            <person name="Kawakami B."/>
            <person name="Yamazaki M."/>
            <person name="Watanabe K."/>
            <person name="Kumagai A."/>
            <person name="Itakura S."/>
            <person name="Fukuzumi Y."/>
            <person name="Fujimori Y."/>
            <person name="Komiyama M."/>
            <person name="Tashiro H."/>
            <person name="Tanigami A."/>
            <person name="Fujiwara T."/>
            <person name="Ono T."/>
            <person name="Yamada K."/>
            <person name="Fujii Y."/>
            <person name="Ozaki K."/>
            <person name="Hirao M."/>
            <person name="Ohmori Y."/>
            <person name="Kawabata A."/>
            <person name="Hikiji T."/>
            <person name="Kobatake N."/>
            <person name="Inagaki H."/>
            <person name="Ikema Y."/>
            <person name="Okamoto S."/>
            <person name="Okitani R."/>
            <person name="Kawakami T."/>
            <person name="Noguchi S."/>
            <person name="Itoh T."/>
            <person name="Shigeta K."/>
            <person name="Senba T."/>
            <person name="Matsumura K."/>
            <person name="Nakajima Y."/>
            <person name="Mizuno T."/>
            <person name="Morinaga M."/>
            <person name="Sasaki M."/>
            <person name="Togashi T."/>
            <person name="Oyama M."/>
            <person name="Hata H."/>
            <person name="Watanabe M."/>
            <person name="Komatsu T."/>
            <person name="Mizushima-Sugano J."/>
            <person name="Satoh T."/>
            <person name="Shirai Y."/>
            <person name="Takahashi Y."/>
            <person name="Nakagawa K."/>
            <person name="Okumura K."/>
            <person name="Nagase T."/>
            <person name="Nomura N."/>
            <person name="Kikuchi H."/>
            <person name="Masuho Y."/>
            <person name="Yamashita R."/>
            <person name="Nakai K."/>
            <person name="Yada T."/>
            <person name="Nakamura Y."/>
            <person name="Ohara O."/>
            <person name="Isogai T."/>
            <person name="Sugano S."/>
        </authorList>
    </citation>
    <scope>NUCLEOTIDE SEQUENCE [LARGE SCALE MRNA] (ISOFORM 2)</scope>
    <source>
        <tissue>Testis</tissue>
    </source>
</reference>
<reference key="2">
    <citation type="journal article" date="2004" name="Genome Res.">
        <title>The status, quality, and expansion of the NIH full-length cDNA project: the Mammalian Gene Collection (MGC).</title>
        <authorList>
            <consortium name="The MGC Project Team"/>
        </authorList>
    </citation>
    <scope>NUCLEOTIDE SEQUENCE [LARGE SCALE MRNA] (ISOFORM 1)</scope>
    <scope>VARIANT SER-77</scope>
    <source>
        <tissue>Testis</tissue>
    </source>
</reference>